<accession>P11012</accession>
<keyword id="KW-0106">Calcium</keyword>
<keyword id="KW-0143">Chaperone</keyword>
<keyword id="KW-1015">Disulfide bond</keyword>
<keyword id="KW-0256">Endoplasmic reticulum</keyword>
<keyword id="KW-0430">Lectin</keyword>
<keyword id="KW-0479">Metal-binding</keyword>
<keyword id="KW-1185">Reference proteome</keyword>
<keyword id="KW-0677">Repeat</keyword>
<keyword id="KW-0732">Signal</keyword>
<keyword id="KW-0862">Zinc</keyword>
<name>CALR_ONCVO</name>
<organism>
    <name type="scientific">Onchocerca volvulus</name>
    <dbReference type="NCBI Taxonomy" id="6282"/>
    <lineage>
        <taxon>Eukaryota</taxon>
        <taxon>Metazoa</taxon>
        <taxon>Ecdysozoa</taxon>
        <taxon>Nematoda</taxon>
        <taxon>Chromadorea</taxon>
        <taxon>Rhabditida</taxon>
        <taxon>Spirurina</taxon>
        <taxon>Spiruromorpha</taxon>
        <taxon>Filarioidea</taxon>
        <taxon>Onchocercidae</taxon>
        <taxon>Onchocerca</taxon>
    </lineage>
</organism>
<reference key="1">
    <citation type="journal article" date="1994" name="Infect. Immun.">
        <title>Epitopes of the Onchocerca volvulus RAL1 antigen, a member of the calreticulin family of proteins, recognized by sera from patients with onchocerciasis.</title>
        <authorList>
            <person name="Rokeach L.A."/>
            <person name="Zimmerman P.A."/>
            <person name="Unnasch T.R."/>
        </authorList>
    </citation>
    <scope>NUCLEOTIDE SEQUENCE [MRNA]</scope>
</reference>
<reference key="2">
    <citation type="journal article" date="1988" name="J. Clin. Invest.">
        <title>Isolation and characterization of expression cDNA clones encoding antigens of Onchocerca volvulus infective larvae.</title>
        <authorList>
            <person name="Unnasch T.R."/>
            <person name="Gallin M.Y."/>
            <person name="Soboslay P.T."/>
            <person name="Erttmann K.D."/>
            <person name="Greene B.M."/>
        </authorList>
    </citation>
    <scope>NUCLEOTIDE SEQUENCE [MRNA] OF 53-388</scope>
</reference>
<comment type="function">
    <text evidence="1">Molecular calcium-binding chaperone promoting folding, oligomeric assembly and quality control in the ER via the calreticulin/calnexin cycle. This lectin may interact transiently with almost all of the monoglucosylated glycoproteins that are synthesized in the ER (By similarity).</text>
</comment>
<comment type="subcellular location">
    <subcellularLocation>
        <location>Endoplasmic reticulum lumen</location>
    </subcellularLocation>
</comment>
<comment type="similarity">
    <text evidence="5">Belongs to the calreticulin family.</text>
</comment>
<evidence type="ECO:0000250" key="1"/>
<evidence type="ECO:0000250" key="2">
    <source>
        <dbReference type="UniProtKB" id="P14211"/>
    </source>
</evidence>
<evidence type="ECO:0000255" key="3"/>
<evidence type="ECO:0000256" key="4">
    <source>
        <dbReference type="SAM" id="MobiDB-lite"/>
    </source>
</evidence>
<evidence type="ECO:0000305" key="5"/>
<sequence length="388" mass="45298">MQLSLLVGLVCFSAINAKIYFKEDFSDDDWEKRWIKSKHKDDFGKWEISHGKFYGDAVKDKGLKTTQDAKFYSIGAKFDKSFSNKGKSLVIQFSVKHEQDIDCGGGYVKLMASDVNLEDSHGETPYHIMFGPDICGPGTKKVHVIFHYKDRNHMIKKDIRCKDDVFTHLYTLIVNSDNTYEVQIDGEKAESGELEADWDFLPPKKIKDPDAKKPEDWDEREFIDDEDDKKPEDWDKPEHIPDPDAKKPEDWDDEMDGEWEPPMVDNPEYKGEWKPKQKKNPAYKGKWIHPEIEIPDYTPDDNLYVYDDIGAIGFDLWQVKSGTIFDDVIVTDSVEEAKKFGEKTLKITREGEKKKGKKTKKQKKKEKNEKIKKEKMKKRKRANRKKKK</sequence>
<proteinExistence type="evidence at transcript level"/>
<feature type="signal peptide" evidence="3">
    <location>
        <begin position="1"/>
        <end position="17"/>
    </location>
</feature>
<feature type="chain" id="PRO_0000004196" description="Calreticulin">
    <location>
        <begin position="18"/>
        <end position="388"/>
    </location>
</feature>
<feature type="repeat" description="1-1">
    <location>
        <begin position="189"/>
        <end position="200"/>
    </location>
</feature>
<feature type="repeat" description="1-2">
    <location>
        <begin position="208"/>
        <end position="219"/>
    </location>
</feature>
<feature type="repeat" description="1-3">
    <location>
        <begin position="225"/>
        <end position="236"/>
    </location>
</feature>
<feature type="repeat" description="1-4">
    <location>
        <begin position="242"/>
        <end position="253"/>
    </location>
</feature>
<feature type="repeat" description="2-1">
    <location>
        <begin position="257"/>
        <end position="267"/>
    </location>
</feature>
<feature type="repeat" description="2-2">
    <location>
        <begin position="271"/>
        <end position="281"/>
    </location>
</feature>
<feature type="repeat" description="2-3">
    <location>
        <begin position="285"/>
        <end position="295"/>
    </location>
</feature>
<feature type="region of interest" description="4 X approximate repeats">
    <location>
        <begin position="189"/>
        <end position="253"/>
    </location>
</feature>
<feature type="region of interest" description="Disordered" evidence="4">
    <location>
        <begin position="193"/>
        <end position="282"/>
    </location>
</feature>
<feature type="region of interest" description="3 X approximate repeats">
    <location>
        <begin position="257"/>
        <end position="295"/>
    </location>
</feature>
<feature type="region of interest" description="Disordered" evidence="4">
    <location>
        <begin position="349"/>
        <end position="388"/>
    </location>
</feature>
<feature type="compositionally biased region" description="Basic and acidic residues" evidence="4">
    <location>
        <begin position="205"/>
        <end position="215"/>
    </location>
</feature>
<feature type="compositionally biased region" description="Acidic residues" evidence="4">
    <location>
        <begin position="216"/>
        <end position="227"/>
    </location>
</feature>
<feature type="compositionally biased region" description="Basic and acidic residues" evidence="4">
    <location>
        <begin position="228"/>
        <end position="249"/>
    </location>
</feature>
<feature type="compositionally biased region" description="Acidic residues" evidence="4">
    <location>
        <begin position="250"/>
        <end position="259"/>
    </location>
</feature>
<feature type="compositionally biased region" description="Basic residues" evidence="4">
    <location>
        <begin position="354"/>
        <end position="365"/>
    </location>
</feature>
<feature type="compositionally biased region" description="Basic residues" evidence="4">
    <location>
        <begin position="373"/>
        <end position="388"/>
    </location>
</feature>
<feature type="binding site" evidence="2">
    <location>
        <position position="107"/>
    </location>
    <ligand>
        <name>an alpha-D-glucoside</name>
        <dbReference type="ChEBI" id="CHEBI:22390"/>
    </ligand>
</feature>
<feature type="binding site" evidence="2">
    <location>
        <position position="109"/>
    </location>
    <ligand>
        <name>an alpha-D-glucoside</name>
        <dbReference type="ChEBI" id="CHEBI:22390"/>
    </ligand>
</feature>
<feature type="binding site" evidence="2">
    <location>
        <position position="126"/>
    </location>
    <ligand>
        <name>an alpha-D-glucoside</name>
        <dbReference type="ChEBI" id="CHEBI:22390"/>
    </ligand>
</feature>
<feature type="binding site" evidence="2">
    <location>
        <position position="133"/>
    </location>
    <ligand>
        <name>an alpha-D-glucoside</name>
        <dbReference type="ChEBI" id="CHEBI:22390"/>
    </ligand>
</feature>
<feature type="binding site" evidence="2">
    <location>
        <position position="315"/>
    </location>
    <ligand>
        <name>an alpha-D-glucoside</name>
        <dbReference type="ChEBI" id="CHEBI:22390"/>
    </ligand>
</feature>
<feature type="disulfide bond" evidence="1">
    <location>
        <begin position="103"/>
        <end position="135"/>
    </location>
</feature>
<gene>
    <name type="primary">crt-1</name>
    <name type="synonym">ral-1</name>
</gene>
<dbReference type="EMBL" id="M20565">
    <property type="protein sequence ID" value="AAA59056.1"/>
    <property type="molecule type" value="mRNA"/>
</dbReference>
<dbReference type="PIR" id="A32507">
    <property type="entry name" value="A32507"/>
</dbReference>
<dbReference type="SMR" id="P11012"/>
<dbReference type="STRING" id="6282.P11012"/>
<dbReference type="HOGENOM" id="CLU_328267_0_0_1"/>
<dbReference type="Proteomes" id="UP000024404">
    <property type="component" value="Unassembled WGS sequence"/>
</dbReference>
<dbReference type="GO" id="GO:0005788">
    <property type="term" value="C:endoplasmic reticulum lumen"/>
    <property type="evidence" value="ECO:0007669"/>
    <property type="project" value="UniProtKB-SubCell"/>
</dbReference>
<dbReference type="GO" id="GO:0005789">
    <property type="term" value="C:endoplasmic reticulum membrane"/>
    <property type="evidence" value="ECO:0007669"/>
    <property type="project" value="TreeGrafter"/>
</dbReference>
<dbReference type="GO" id="GO:0005509">
    <property type="term" value="F:calcium ion binding"/>
    <property type="evidence" value="ECO:0007669"/>
    <property type="project" value="InterPro"/>
</dbReference>
<dbReference type="GO" id="GO:0030246">
    <property type="term" value="F:carbohydrate binding"/>
    <property type="evidence" value="ECO:0007669"/>
    <property type="project" value="UniProtKB-KW"/>
</dbReference>
<dbReference type="GO" id="GO:0051082">
    <property type="term" value="F:unfolded protein binding"/>
    <property type="evidence" value="ECO:0007669"/>
    <property type="project" value="InterPro"/>
</dbReference>
<dbReference type="GO" id="GO:0036503">
    <property type="term" value="P:ERAD pathway"/>
    <property type="evidence" value="ECO:0007669"/>
    <property type="project" value="TreeGrafter"/>
</dbReference>
<dbReference type="GO" id="GO:0006457">
    <property type="term" value="P:protein folding"/>
    <property type="evidence" value="ECO:0007669"/>
    <property type="project" value="InterPro"/>
</dbReference>
<dbReference type="FunFam" id="2.10.250.10:FF:000002">
    <property type="entry name" value="Calreticulin"/>
    <property type="match status" value="1"/>
</dbReference>
<dbReference type="FunFam" id="2.60.120.200:FF:000122">
    <property type="entry name" value="Calreticulin 3"/>
    <property type="match status" value="1"/>
</dbReference>
<dbReference type="Gene3D" id="2.60.120.200">
    <property type="match status" value="1"/>
</dbReference>
<dbReference type="Gene3D" id="2.10.250.10">
    <property type="entry name" value="Calreticulin/calnexin, P domain"/>
    <property type="match status" value="1"/>
</dbReference>
<dbReference type="InterPro" id="IPR001580">
    <property type="entry name" value="Calret/calnex"/>
</dbReference>
<dbReference type="InterPro" id="IPR018124">
    <property type="entry name" value="Calret/calnex_CS"/>
</dbReference>
<dbReference type="InterPro" id="IPR009169">
    <property type="entry name" value="Calreticulin"/>
</dbReference>
<dbReference type="InterPro" id="IPR009033">
    <property type="entry name" value="Calreticulin/calnexin_P_dom_sf"/>
</dbReference>
<dbReference type="InterPro" id="IPR013320">
    <property type="entry name" value="ConA-like_dom_sf"/>
</dbReference>
<dbReference type="PANTHER" id="PTHR11073:SF2">
    <property type="entry name" value="CALRETICULIN"/>
    <property type="match status" value="1"/>
</dbReference>
<dbReference type="PANTHER" id="PTHR11073">
    <property type="entry name" value="CALRETICULIN AND CALNEXIN"/>
    <property type="match status" value="1"/>
</dbReference>
<dbReference type="Pfam" id="PF00262">
    <property type="entry name" value="Calreticulin"/>
    <property type="match status" value="2"/>
</dbReference>
<dbReference type="PIRSF" id="PIRSF002356">
    <property type="entry name" value="Calreticulin"/>
    <property type="match status" value="1"/>
</dbReference>
<dbReference type="PRINTS" id="PR00626">
    <property type="entry name" value="CALRETICULIN"/>
</dbReference>
<dbReference type="SUPFAM" id="SSF49899">
    <property type="entry name" value="Concanavalin A-like lectins/glucanases"/>
    <property type="match status" value="1"/>
</dbReference>
<dbReference type="SUPFAM" id="SSF63887">
    <property type="entry name" value="P-domain of calnexin/calreticulin"/>
    <property type="match status" value="1"/>
</dbReference>
<dbReference type="PROSITE" id="PS00803">
    <property type="entry name" value="CALRETICULIN_1"/>
    <property type="match status" value="1"/>
</dbReference>
<dbReference type="PROSITE" id="PS00804">
    <property type="entry name" value="CALRETICULIN_2"/>
    <property type="match status" value="1"/>
</dbReference>
<dbReference type="PROSITE" id="PS00805">
    <property type="entry name" value="CALRETICULIN_REPEAT"/>
    <property type="match status" value="3"/>
</dbReference>
<protein>
    <recommendedName>
        <fullName>Calreticulin</fullName>
    </recommendedName>
    <alternativeName>
        <fullName>41 kDa larval antigen</fullName>
    </alternativeName>
    <alternativeName>
        <fullName>Protein ral-1</fullName>
    </alternativeName>
    <alternativeName>
        <fullName>RAL1 antigen</fullName>
    </alternativeName>
</protein>